<evidence type="ECO:0000255" key="1">
    <source>
        <dbReference type="PROSITE-ProRule" id="PRU00520"/>
    </source>
</evidence>
<evidence type="ECO:0000305" key="2"/>
<comment type="catalytic activity">
    <reaction>
        <text>an acyl phosphate + H2O = a carboxylate + phosphate + H(+)</text>
        <dbReference type="Rhea" id="RHEA:14965"/>
        <dbReference type="ChEBI" id="CHEBI:15377"/>
        <dbReference type="ChEBI" id="CHEBI:15378"/>
        <dbReference type="ChEBI" id="CHEBI:29067"/>
        <dbReference type="ChEBI" id="CHEBI:43474"/>
        <dbReference type="ChEBI" id="CHEBI:59918"/>
        <dbReference type="EC" id="3.6.1.7"/>
    </reaction>
</comment>
<comment type="similarity">
    <text evidence="2">Belongs to the acylphosphatase family.</text>
</comment>
<accession>A1VW83</accession>
<geneLocation type="plasmid">
    <name>pPNAP03</name>
</geneLocation>
<proteinExistence type="inferred from homology"/>
<reference key="1">
    <citation type="journal article" date="2009" name="Environ. Microbiol.">
        <title>The genome of Polaromonas naphthalenivorans strain CJ2, isolated from coal tar-contaminated sediment, reveals physiological and metabolic versatility and evolution through extensive horizontal gene transfer.</title>
        <authorList>
            <person name="Yagi J.M."/>
            <person name="Sims D."/>
            <person name="Brettin T."/>
            <person name="Bruce D."/>
            <person name="Madsen E.L."/>
        </authorList>
    </citation>
    <scope>NUCLEOTIDE SEQUENCE [LARGE SCALE GENOMIC DNA]</scope>
    <source>
        <strain>CJ2</strain>
    </source>
</reference>
<protein>
    <recommendedName>
        <fullName>Acylphosphatase</fullName>
        <ecNumber>3.6.1.7</ecNumber>
    </recommendedName>
    <alternativeName>
        <fullName>Acylphosphate phosphohydrolase</fullName>
    </alternativeName>
</protein>
<feature type="chain" id="PRO_0000326770" description="Acylphosphatase">
    <location>
        <begin position="1"/>
        <end position="101"/>
    </location>
</feature>
<feature type="domain" description="Acylphosphatase-like" evidence="1">
    <location>
        <begin position="11"/>
        <end position="99"/>
    </location>
</feature>
<feature type="active site" evidence="1">
    <location>
        <position position="26"/>
    </location>
</feature>
<feature type="active site" evidence="1">
    <location>
        <position position="44"/>
    </location>
</feature>
<organism>
    <name type="scientific">Polaromonas naphthalenivorans (strain CJ2)</name>
    <dbReference type="NCBI Taxonomy" id="365044"/>
    <lineage>
        <taxon>Bacteria</taxon>
        <taxon>Pseudomonadati</taxon>
        <taxon>Pseudomonadota</taxon>
        <taxon>Betaproteobacteria</taxon>
        <taxon>Burkholderiales</taxon>
        <taxon>Comamonadaceae</taxon>
        <taxon>Polaromonas</taxon>
    </lineage>
</organism>
<sequence length="101" mass="11524">MQSDKDKTFDSWLVKAIGRVQGVGYRDACIRYARAQDITGWVRNRVDGSVELMLQGSKEQLADMCRWLRDGIPAAHVEKLEVSKVPPPSPRLNRFDRLPNL</sequence>
<name>ACYP_POLNA</name>
<keyword id="KW-0378">Hydrolase</keyword>
<keyword id="KW-0614">Plasmid</keyword>
<keyword id="KW-1185">Reference proteome</keyword>
<dbReference type="EC" id="3.6.1.7"/>
<dbReference type="EMBL" id="CP000532">
    <property type="protein sequence ID" value="ABM39911.1"/>
    <property type="molecule type" value="Genomic_DNA"/>
</dbReference>
<dbReference type="RefSeq" id="WP_011798282.1">
    <property type="nucleotide sequence ID" value="NC_008759.1"/>
</dbReference>
<dbReference type="SMR" id="A1VW83"/>
<dbReference type="KEGG" id="pna:Pnap_4846"/>
<dbReference type="HOGENOM" id="CLU_141932_1_2_4"/>
<dbReference type="OrthoDB" id="5295388at2"/>
<dbReference type="Proteomes" id="UP000000644">
    <property type="component" value="Plasmid pPNAP03"/>
</dbReference>
<dbReference type="GO" id="GO:0003998">
    <property type="term" value="F:acylphosphatase activity"/>
    <property type="evidence" value="ECO:0007669"/>
    <property type="project" value="UniProtKB-EC"/>
</dbReference>
<dbReference type="Gene3D" id="3.30.70.100">
    <property type="match status" value="1"/>
</dbReference>
<dbReference type="InterPro" id="IPR020456">
    <property type="entry name" value="Acylphosphatase"/>
</dbReference>
<dbReference type="InterPro" id="IPR001792">
    <property type="entry name" value="Acylphosphatase-like_dom"/>
</dbReference>
<dbReference type="InterPro" id="IPR036046">
    <property type="entry name" value="Acylphosphatase-like_dom_sf"/>
</dbReference>
<dbReference type="InterPro" id="IPR017968">
    <property type="entry name" value="Acylphosphatase_CS"/>
</dbReference>
<dbReference type="PANTHER" id="PTHR47268">
    <property type="entry name" value="ACYLPHOSPHATASE"/>
    <property type="match status" value="1"/>
</dbReference>
<dbReference type="PANTHER" id="PTHR47268:SF4">
    <property type="entry name" value="ACYLPHOSPHATASE"/>
    <property type="match status" value="1"/>
</dbReference>
<dbReference type="Pfam" id="PF00708">
    <property type="entry name" value="Acylphosphatase"/>
    <property type="match status" value="1"/>
</dbReference>
<dbReference type="SUPFAM" id="SSF54975">
    <property type="entry name" value="Acylphosphatase/BLUF domain-like"/>
    <property type="match status" value="1"/>
</dbReference>
<dbReference type="PROSITE" id="PS00151">
    <property type="entry name" value="ACYLPHOSPHATASE_2"/>
    <property type="match status" value="1"/>
</dbReference>
<dbReference type="PROSITE" id="PS51160">
    <property type="entry name" value="ACYLPHOSPHATASE_3"/>
    <property type="match status" value="1"/>
</dbReference>
<gene>
    <name type="primary">acyP</name>
    <name type="ordered locus">Pnap_4846</name>
</gene>